<sequence length="821" mass="92511">MMCLIIYLSIFLIIVSRMLTGLPMMDRPDEGGLARRTVGEVEGEFSYRDDVDVADVRNLFIMLPKNGSDIFLFIFDRRSQRQRGTMFLFPKAGFVQPTPAKVRDEAAAAPFGFISPVYPLSSLLFNPYNGRYLTTRHLIAFEVTPESSLHDWYFARSPTTATQTQPLGHITNPPRRSPKDKPTTSGHTDLIIRYCALELDFFQDTRRQRDGIYLPNYEAVWPLAMNFLEGMWIWSNRTLVNVTIGVGFMGFSLTSISYPPLEIIVTPHYTNARMITRFKSSLVLDPPGPSEGPLYKVYVLGYGNNRINGSFYKTMRTIASYPRTKPRLSLPPFHGTYGTALFLSHATPQDMDGTTAYISKISTRLATALFSLSEVRRLSGYVAIDELIDLDFNTRLLANTLLADGMQNFQDPINITYYYNSDVGRTHLRDALDTIDHQHVSHGSLITRARYLQLIYTYTSMEKQSQLSLKLSGDIVKDLYLETLYSDVVRWNTTAKQALFLSSMLIYIAGNIQSSVEQEAINAGRMLFLQCTSMCTTEHASTVRWNPQQILYDLTKSSTRFNIFDGFSPCMASNRYDIISPYGILDLFSAFPISSYRSIEKPAVDSNTHNIIFNLRNLYTFIPELFSCPGVSSNHQRPIAVLPIGINCTYLITRRDPRRGTLYIVDGIDVSNPIIISYLRSGECGIERGIILPGNLNNPENTDQCLYCGCVFMRYKSSGEIVDLLLINDKAVELELVAGENSTISAFNPTKYSSPSSVLLLFPNGTIVTLMAFTSHEVIVFSSNFIWASIGGVFAACLIIYIIIKMLCSFTPDVRYTLLNN</sequence>
<evidence type="ECO:0000255" key="1">
    <source>
        <dbReference type="HAMAP-Rule" id="MF_04033"/>
    </source>
</evidence>
<evidence type="ECO:0000256" key="2">
    <source>
        <dbReference type="SAM" id="MobiDB-lite"/>
    </source>
</evidence>
<organism>
    <name type="scientific">Feline herpesvirus 1</name>
    <name type="common">FeHV-1</name>
    <name type="synonym">Feline viral rhinotracheitis virus</name>
    <dbReference type="NCBI Taxonomy" id="10334"/>
    <lineage>
        <taxon>Viruses</taxon>
        <taxon>Duplodnaviria</taxon>
        <taxon>Heunggongvirae</taxon>
        <taxon>Peploviricota</taxon>
        <taxon>Herviviricetes</taxon>
        <taxon>Herpesvirales</taxon>
        <taxon>Orthoherpesviridae</taxon>
        <taxon>Alphaherpesvirinae</taxon>
        <taxon>Varicellovirus</taxon>
        <taxon>Varicellovirus felidalpha1</taxon>
    </lineage>
</organism>
<feature type="signal peptide" evidence="1">
    <location>
        <begin position="1"/>
        <end position="20"/>
    </location>
</feature>
<feature type="chain" id="PRO_0000038248" description="Envelope glycoprotein H" evidence="1">
    <location>
        <begin position="21"/>
        <end position="821"/>
    </location>
</feature>
<feature type="topological domain" description="Virion surface" evidence="1">
    <location>
        <begin position="21"/>
        <end position="783"/>
    </location>
</feature>
<feature type="transmembrane region" description="Helical" evidence="1">
    <location>
        <begin position="784"/>
        <end position="804"/>
    </location>
</feature>
<feature type="topological domain" description="Intravirion" evidence="1">
    <location>
        <begin position="805"/>
        <end position="821"/>
    </location>
</feature>
<feature type="region of interest" description="Disordered" evidence="2">
    <location>
        <begin position="163"/>
        <end position="186"/>
    </location>
</feature>
<feature type="region of interest" description="Interaction with gL" evidence="1">
    <location>
        <begin position="236"/>
        <end position="299"/>
    </location>
</feature>
<feature type="glycosylation site" description="N-linked (GlcNAc...) asparagine; by host" evidence="1">
    <location>
        <position position="66"/>
    </location>
</feature>
<feature type="glycosylation site" description="N-linked (GlcNAc...) asparagine; by host" evidence="1">
    <location>
        <position position="236"/>
    </location>
</feature>
<feature type="glycosylation site" description="N-linked (GlcNAc...) asparagine; by host" evidence="1">
    <location>
        <position position="241"/>
    </location>
</feature>
<feature type="glycosylation site" description="N-linked (GlcNAc...) asparagine; by host" evidence="1">
    <location>
        <position position="308"/>
    </location>
</feature>
<feature type="glycosylation site" description="N-linked (GlcNAc...) asparagine; by host" evidence="1">
    <location>
        <position position="414"/>
    </location>
</feature>
<feature type="glycosylation site" description="N-linked (GlcNAc...) asparagine; by host" evidence="1">
    <location>
        <position position="492"/>
    </location>
</feature>
<feature type="glycosylation site" description="N-linked (GlcNAc...) asparagine; by host" evidence="1">
    <location>
        <position position="647"/>
    </location>
</feature>
<feature type="glycosylation site" description="N-linked (GlcNAc...) asparagine; by host" evidence="1">
    <location>
        <position position="741"/>
    </location>
</feature>
<feature type="glycosylation site" description="N-linked (GlcNAc...) asparagine; by host" evidence="1">
    <location>
        <position position="764"/>
    </location>
</feature>
<reference key="1">
    <citation type="journal article" date="1993" name="Arch. Virol.">
        <title>Identification and nucleotide sequence of a gene in feline herpesvirus type 1 homologous to the herpes simplex virus gene encoding the glycoprotein H.</title>
        <authorList>
            <person name="Maeda K."/>
            <person name="Kawaguchi Y."/>
            <person name="Kamiya N."/>
            <person name="Ono M."/>
            <person name="Tohya Y."/>
            <person name="Kai C."/>
            <person name="Mikami T."/>
        </authorList>
    </citation>
    <scope>NUCLEOTIDE SEQUENCE [GENOMIC DNA]</scope>
</reference>
<reference key="2">
    <citation type="journal article" date="1989" name="J. Virol.">
        <title>Identification of the thymidine kinase gene of feline herpesvirus: use of degenerate oligonucleotides in the polymerase chain reaction to isolate herpesvirus gene homologs.</title>
        <authorList>
            <person name="Nunberg J.H."/>
            <person name="Wright D.K."/>
            <person name="Cole G.E."/>
            <person name="Petrovskis E.A."/>
            <person name="Post L.E."/>
            <person name="Compton T."/>
            <person name="Gilbert J.H."/>
        </authorList>
    </citation>
    <scope>NUCLEOTIDE SEQUENCE [GENOMIC DNA] OF 1-26</scope>
</reference>
<comment type="function">
    <text evidence="1">The heterodimer glycoprotein H-glycoprotein L is required for the fusion of viral and plasma membranes leading to virus entry into the host cell. Following initial binding to host receptor, membrane fusion is mediated by the fusion machinery composed of gB and the heterodimer gH/gL. May also be involved in the fusion between the virion envelope and the outer nuclear membrane during virion morphogenesis.</text>
</comment>
<comment type="subunit">
    <text evidence="1">Interacts with glycoprotein L (gL); this interaction is necessary for the correct processing and cell surface expression of gH. The heterodimer gH/gL seems to interact with gB trimers during fusion.</text>
</comment>
<comment type="subcellular location">
    <subcellularLocation>
        <location evidence="1">Virion membrane</location>
        <topology evidence="1">Single-pass type I membrane protein</topology>
    </subcellularLocation>
    <subcellularLocation>
        <location evidence="1">Host cell membrane</location>
        <topology evidence="1">Single-pass type I membrane protein</topology>
    </subcellularLocation>
    <subcellularLocation>
        <location evidence="1">Host endosome membrane</location>
        <topology evidence="1">Single-pass type I membrane protein</topology>
    </subcellularLocation>
    <text evidence="1">During virion morphogenesis, this protein probably accumulates in the endosomes and trans-Golgi where secondary envelopment occurs. It is probably transported to the cell surface from where it is endocytosed and directed to the trans-Golgi network (TGN).</text>
</comment>
<comment type="PTM">
    <text evidence="1">N-glycosylated, O-glycosylated, and sialylated.</text>
</comment>
<comment type="similarity">
    <text evidence="1">Belongs to the herpesviridae glycoprotein H family.</text>
</comment>
<accession>P13160</accession>
<accession>Q86643</accession>
<organismHost>
    <name type="scientific">Felidae</name>
    <name type="common">cat family</name>
    <dbReference type="NCBI Taxonomy" id="9681"/>
</organismHost>
<proteinExistence type="inferred from homology"/>
<keyword id="KW-1169">Fusion of virus membrane with host cell membrane</keyword>
<keyword id="KW-1168">Fusion of virus membrane with host membrane</keyword>
<keyword id="KW-0325">Glycoprotein</keyword>
<keyword id="KW-1032">Host cell membrane</keyword>
<keyword id="KW-1039">Host endosome</keyword>
<keyword id="KW-1043">Host membrane</keyword>
<keyword id="KW-0472">Membrane</keyword>
<keyword id="KW-0730">Sialic acid</keyword>
<keyword id="KW-0732">Signal</keyword>
<keyword id="KW-0812">Transmembrane</keyword>
<keyword id="KW-1133">Transmembrane helix</keyword>
<keyword id="KW-0261">Viral envelope protein</keyword>
<keyword id="KW-1162">Viral penetration into host cytoplasm</keyword>
<keyword id="KW-0946">Virion</keyword>
<keyword id="KW-1160">Virus entry into host cell</keyword>
<gene>
    <name evidence="1" type="primary">gH</name>
</gene>
<dbReference type="EMBL" id="S64566">
    <property type="protein sequence ID" value="AAB27840.1"/>
    <property type="molecule type" value="Genomic_DNA"/>
</dbReference>
<dbReference type="EMBL" id="M26660">
    <property type="protein sequence ID" value="AAA46173.1"/>
    <property type="molecule type" value="Genomic_DNA"/>
</dbReference>
<dbReference type="SMR" id="P13160"/>
<dbReference type="GlyCosmos" id="P13160">
    <property type="glycosylation" value="9 sites, No reported glycans"/>
</dbReference>
<dbReference type="GO" id="GO:0044175">
    <property type="term" value="C:host cell endosome membrane"/>
    <property type="evidence" value="ECO:0007669"/>
    <property type="project" value="UniProtKB-SubCell"/>
</dbReference>
<dbReference type="GO" id="GO:0020002">
    <property type="term" value="C:host cell plasma membrane"/>
    <property type="evidence" value="ECO:0007669"/>
    <property type="project" value="UniProtKB-SubCell"/>
</dbReference>
<dbReference type="GO" id="GO:0016020">
    <property type="term" value="C:membrane"/>
    <property type="evidence" value="ECO:0007669"/>
    <property type="project" value="UniProtKB-KW"/>
</dbReference>
<dbReference type="GO" id="GO:0019031">
    <property type="term" value="C:viral envelope"/>
    <property type="evidence" value="ECO:0007669"/>
    <property type="project" value="UniProtKB-KW"/>
</dbReference>
<dbReference type="GO" id="GO:0055036">
    <property type="term" value="C:virion membrane"/>
    <property type="evidence" value="ECO:0007669"/>
    <property type="project" value="UniProtKB-SubCell"/>
</dbReference>
<dbReference type="GO" id="GO:0019064">
    <property type="term" value="P:fusion of virus membrane with host plasma membrane"/>
    <property type="evidence" value="ECO:0007669"/>
    <property type="project" value="UniProtKB-KW"/>
</dbReference>
<dbReference type="GO" id="GO:0046718">
    <property type="term" value="P:symbiont entry into host cell"/>
    <property type="evidence" value="ECO:0007669"/>
    <property type="project" value="UniProtKB-KW"/>
</dbReference>
<dbReference type="Gene3D" id="1.20.58.1340">
    <property type="match status" value="1"/>
</dbReference>
<dbReference type="Gene3D" id="3.30.500.50">
    <property type="match status" value="1"/>
</dbReference>
<dbReference type="Gene3D" id="2.60.40.3190">
    <property type="entry name" value="Herpesvirus glycoprotein H, C-terminal domain"/>
    <property type="match status" value="1"/>
</dbReference>
<dbReference type="HAMAP" id="MF_04033">
    <property type="entry name" value="HSV_GH"/>
    <property type="match status" value="1"/>
</dbReference>
<dbReference type="InterPro" id="IPR003493">
    <property type="entry name" value="Herpes_gH"/>
</dbReference>
<dbReference type="InterPro" id="IPR035305">
    <property type="entry name" value="Herpes_glycoH_C"/>
</dbReference>
<dbReference type="InterPro" id="IPR038172">
    <property type="entry name" value="Herpes_glycoH_C_sf"/>
</dbReference>
<dbReference type="Pfam" id="PF17488">
    <property type="entry name" value="Herpes_glycoH_C"/>
    <property type="match status" value="1"/>
</dbReference>
<dbReference type="Pfam" id="PF02489">
    <property type="entry name" value="Herpes_glycop_H"/>
    <property type="match status" value="1"/>
</dbReference>
<protein>
    <recommendedName>
        <fullName evidence="1">Envelope glycoprotein H</fullName>
        <shortName evidence="1">gH</shortName>
    </recommendedName>
</protein>
<name>GH_FHV1</name>